<protein>
    <recommendedName>
        <fullName evidence="1">UPF0473 protein Daud_0916</fullName>
    </recommendedName>
</protein>
<organism>
    <name type="scientific">Desulforudis audaxviator (strain MP104C)</name>
    <dbReference type="NCBI Taxonomy" id="477974"/>
    <lineage>
        <taxon>Bacteria</taxon>
        <taxon>Bacillati</taxon>
        <taxon>Bacillota</taxon>
        <taxon>Clostridia</taxon>
        <taxon>Thermoanaerobacterales</taxon>
        <taxon>Candidatus Desulforudaceae</taxon>
        <taxon>Candidatus Desulforudis</taxon>
    </lineage>
</organism>
<dbReference type="EMBL" id="CP000860">
    <property type="protein sequence ID" value="ACA59429.1"/>
    <property type="molecule type" value="Genomic_DNA"/>
</dbReference>
<dbReference type="STRING" id="477974.Daud_0916"/>
<dbReference type="KEGG" id="dau:Daud_0916"/>
<dbReference type="eggNOG" id="COG3906">
    <property type="taxonomic scope" value="Bacteria"/>
</dbReference>
<dbReference type="HOGENOM" id="CLU_146610_8_1_9"/>
<dbReference type="Proteomes" id="UP000008544">
    <property type="component" value="Chromosome"/>
</dbReference>
<dbReference type="HAMAP" id="MF_01448">
    <property type="entry name" value="UPF0473"/>
    <property type="match status" value="1"/>
</dbReference>
<dbReference type="InterPro" id="IPR009711">
    <property type="entry name" value="UPF0473"/>
</dbReference>
<dbReference type="Pfam" id="PF06949">
    <property type="entry name" value="DUF1292"/>
    <property type="match status" value="1"/>
</dbReference>
<comment type="similarity">
    <text evidence="1">Belongs to the UPF0473 family.</text>
</comment>
<sequence length="87" mass="10101">MTMTSEEVITLIDEEGVEHDFTVLDILEVDGTEYAILIPVDDEEQEDEVVIFKFTEDDEGNEILVEIEDDEWEKVADAWQEKVGREH</sequence>
<name>Y916_DESAP</name>
<accession>B1I374</accession>
<keyword id="KW-1185">Reference proteome</keyword>
<reference key="1">
    <citation type="submission" date="2007-10" db="EMBL/GenBank/DDBJ databases">
        <title>Complete sequence of chromosome of Desulforudis audaxviator MP104C.</title>
        <authorList>
            <person name="Copeland A."/>
            <person name="Lucas S."/>
            <person name="Lapidus A."/>
            <person name="Barry K."/>
            <person name="Glavina del Rio T."/>
            <person name="Dalin E."/>
            <person name="Tice H."/>
            <person name="Bruce D."/>
            <person name="Pitluck S."/>
            <person name="Lowry S.R."/>
            <person name="Larimer F."/>
            <person name="Land M.L."/>
            <person name="Hauser L."/>
            <person name="Kyrpides N."/>
            <person name="Ivanova N.N."/>
            <person name="Richardson P."/>
        </authorList>
    </citation>
    <scope>NUCLEOTIDE SEQUENCE [LARGE SCALE GENOMIC DNA]</scope>
    <source>
        <strain>MP104C</strain>
    </source>
</reference>
<evidence type="ECO:0000255" key="1">
    <source>
        <dbReference type="HAMAP-Rule" id="MF_01448"/>
    </source>
</evidence>
<gene>
    <name type="ordered locus">Daud_0916</name>
</gene>
<feature type="chain" id="PRO_1000200975" description="UPF0473 protein Daud_0916">
    <location>
        <begin position="1"/>
        <end position="87"/>
    </location>
</feature>
<proteinExistence type="inferred from homology"/>